<keyword id="KW-1003">Cell membrane</keyword>
<keyword id="KW-0325">Glycoprotein</keyword>
<keyword id="KW-0406">Ion transport</keyword>
<keyword id="KW-0472">Membrane</keyword>
<keyword id="KW-0630">Potassium</keyword>
<keyword id="KW-0633">Potassium transport</keyword>
<keyword id="KW-1185">Reference proteome</keyword>
<keyword id="KW-0732">Signal</keyword>
<keyword id="KW-0915">Sodium</keyword>
<keyword id="KW-0739">Sodium transport</keyword>
<keyword id="KW-0740">Sodium/potassium transport</keyword>
<keyword id="KW-0812">Transmembrane</keyword>
<keyword id="KW-1133">Transmembrane helix</keyword>
<keyword id="KW-0813">Transport</keyword>
<dbReference type="EMBL" id="U72680">
    <property type="protein sequence ID" value="AAB51040.1"/>
    <property type="molecule type" value="mRNA"/>
</dbReference>
<dbReference type="EMBL" id="AK003068">
    <property type="protein sequence ID" value="BAB22545.1"/>
    <property type="molecule type" value="mRNA"/>
</dbReference>
<dbReference type="EMBL" id="AK155763">
    <property type="protein sequence ID" value="BAE33425.1"/>
    <property type="molecule type" value="mRNA"/>
</dbReference>
<dbReference type="EMBL" id="AK169966">
    <property type="protein sequence ID" value="BAE41487.1"/>
    <property type="molecule type" value="mRNA"/>
</dbReference>
<dbReference type="EMBL" id="AK170810">
    <property type="protein sequence ID" value="BAE42043.1"/>
    <property type="molecule type" value="mRNA"/>
</dbReference>
<dbReference type="EMBL" id="AC149055">
    <property type="status" value="NOT_ANNOTATED_CDS"/>
    <property type="molecule type" value="Genomic_DNA"/>
</dbReference>
<dbReference type="CCDS" id="CCDS21121.1"/>
<dbReference type="RefSeq" id="NP_001104543.1">
    <property type="nucleotide sequence ID" value="NM_001111073.3"/>
</dbReference>
<dbReference type="RefSeq" id="NP_001274142.1">
    <property type="nucleotide sequence ID" value="NM_001287213.2"/>
</dbReference>
<dbReference type="RefSeq" id="NP_032787.1">
    <property type="nucleotide sequence ID" value="NM_008761.5"/>
</dbReference>
<dbReference type="SMR" id="P97808"/>
<dbReference type="FunCoup" id="P97808">
    <property type="interactions" value="635"/>
</dbReference>
<dbReference type="STRING" id="10090.ENSMUSP00000009831"/>
<dbReference type="iPTMnet" id="P97808"/>
<dbReference type="PhosphoSitePlus" id="P97808"/>
<dbReference type="SwissPalm" id="P97808"/>
<dbReference type="PaxDb" id="10090-ENSMUSP00000125285"/>
<dbReference type="PeptideAtlas" id="P97808"/>
<dbReference type="ProteomicsDB" id="267547"/>
<dbReference type="DNASU" id="18301"/>
<dbReference type="Ensembl" id="ENSMUST00000159924.8">
    <property type="protein sequence ID" value="ENSMUSP00000124219.2"/>
    <property type="gene ID" value="ENSMUSG00000009687.15"/>
</dbReference>
<dbReference type="Ensembl" id="ENSMUST00000161684.8">
    <property type="protein sequence ID" value="ENSMUSP00000125285.2"/>
    <property type="gene ID" value="ENSMUSG00000009687.15"/>
</dbReference>
<dbReference type="Ensembl" id="ENSMUST00000161805.8">
    <property type="protein sequence ID" value="ENSMUSP00000125398.2"/>
    <property type="gene ID" value="ENSMUSG00000009687.15"/>
</dbReference>
<dbReference type="Ensembl" id="ENSMUST00000162087.8">
    <property type="protein sequence ID" value="ENSMUSP00000125065.2"/>
    <property type="gene ID" value="ENSMUSG00000009687.15"/>
</dbReference>
<dbReference type="Ensembl" id="ENSMUST00000162116.8">
    <property type="protein sequence ID" value="ENSMUSP00000124203.2"/>
    <property type="gene ID" value="ENSMUSG00000009687.15"/>
</dbReference>
<dbReference type="GeneID" id="18301"/>
<dbReference type="KEGG" id="mmu:18301"/>
<dbReference type="UCSC" id="uc009ghp.3">
    <property type="organism name" value="mouse"/>
</dbReference>
<dbReference type="AGR" id="MGI:1201785"/>
<dbReference type="CTD" id="53827"/>
<dbReference type="MGI" id="MGI:1201785">
    <property type="gene designation" value="Fxyd5"/>
</dbReference>
<dbReference type="VEuPathDB" id="HostDB:ENSMUSG00000009687"/>
<dbReference type="eggNOG" id="ENOG502TDJN">
    <property type="taxonomic scope" value="Eukaryota"/>
</dbReference>
<dbReference type="GeneTree" id="ENSGT00990000203831"/>
<dbReference type="InParanoid" id="P97808"/>
<dbReference type="PhylomeDB" id="P97808"/>
<dbReference type="TreeFam" id="TF338182"/>
<dbReference type="BioGRID-ORCS" id="18301">
    <property type="hits" value="6 hits in 77 CRISPR screens"/>
</dbReference>
<dbReference type="ChiTaRS" id="Fxyd5">
    <property type="organism name" value="mouse"/>
</dbReference>
<dbReference type="PRO" id="PR:P97808"/>
<dbReference type="Proteomes" id="UP000000589">
    <property type="component" value="Chromosome 7"/>
</dbReference>
<dbReference type="RNAct" id="P97808">
    <property type="molecule type" value="protein"/>
</dbReference>
<dbReference type="Bgee" id="ENSMUSG00000009687">
    <property type="expression patterns" value="Expressed in granulocyte and 207 other cell types or tissues"/>
</dbReference>
<dbReference type="ExpressionAtlas" id="P97808">
    <property type="expression patterns" value="baseline and differential"/>
</dbReference>
<dbReference type="GO" id="GO:0016323">
    <property type="term" value="C:basolateral plasma membrane"/>
    <property type="evidence" value="ECO:0007669"/>
    <property type="project" value="UniProtKB-SubCell"/>
</dbReference>
<dbReference type="GO" id="GO:0005886">
    <property type="term" value="C:plasma membrane"/>
    <property type="evidence" value="ECO:0000314"/>
    <property type="project" value="UniProtKB"/>
</dbReference>
<dbReference type="GO" id="GO:0099106">
    <property type="term" value="F:ion channel regulator activity"/>
    <property type="evidence" value="ECO:0000314"/>
    <property type="project" value="UniProtKB"/>
</dbReference>
<dbReference type="GO" id="GO:0015459">
    <property type="term" value="F:potassium channel regulator activity"/>
    <property type="evidence" value="ECO:0000314"/>
    <property type="project" value="UniProtKB"/>
</dbReference>
<dbReference type="GO" id="GO:0017080">
    <property type="term" value="F:sodium channel regulator activity"/>
    <property type="evidence" value="ECO:0000314"/>
    <property type="project" value="UniProtKB"/>
</dbReference>
<dbReference type="GO" id="GO:0006813">
    <property type="term" value="P:potassium ion transport"/>
    <property type="evidence" value="ECO:0007669"/>
    <property type="project" value="UniProtKB-KW"/>
</dbReference>
<dbReference type="GO" id="GO:0043269">
    <property type="term" value="P:regulation of monoatomic ion transport"/>
    <property type="evidence" value="ECO:0007669"/>
    <property type="project" value="InterPro"/>
</dbReference>
<dbReference type="GO" id="GO:0006814">
    <property type="term" value="P:sodium ion transport"/>
    <property type="evidence" value="ECO:0007669"/>
    <property type="project" value="UniProtKB-KW"/>
</dbReference>
<dbReference type="CDD" id="cd20323">
    <property type="entry name" value="FXYD_FXYD5"/>
    <property type="match status" value="1"/>
</dbReference>
<dbReference type="FunFam" id="1.20.5.780:FF:000005">
    <property type="entry name" value="FXYD domain-containing ion transport regulator"/>
    <property type="match status" value="1"/>
</dbReference>
<dbReference type="Gene3D" id="1.20.5.780">
    <property type="entry name" value="Single helix bin"/>
    <property type="match status" value="1"/>
</dbReference>
<dbReference type="InterPro" id="IPR047297">
    <property type="entry name" value="FXYD_motif"/>
</dbReference>
<dbReference type="InterPro" id="IPR000272">
    <property type="entry name" value="Ion-transport_regulator_FXYD"/>
</dbReference>
<dbReference type="PANTHER" id="PTHR14132:SF14">
    <property type="entry name" value="FXYD DOMAIN-CONTAINING ION TRANSPORT REGULATOR 5"/>
    <property type="match status" value="1"/>
</dbReference>
<dbReference type="PANTHER" id="PTHR14132">
    <property type="entry name" value="SODIUM/POTASSIUM-TRANSPORTING ATPASE SUBUNIT GAMMA"/>
    <property type="match status" value="1"/>
</dbReference>
<dbReference type="Pfam" id="PF02038">
    <property type="entry name" value="ATP1G1_PLM_MAT8"/>
    <property type="match status" value="1"/>
</dbReference>
<dbReference type="PROSITE" id="PS01310">
    <property type="entry name" value="FXYD"/>
    <property type="match status" value="1"/>
</dbReference>
<comment type="function">
    <text evidence="1 4 5">Associates with and regulates the activity of the sodium/potassium-transporting ATPase (NKA) which catalyzes the hydrolysis of ATP coupled with the exchange of Na(+) and K(+) ions across the plasma membrane (PubMed:16148001, PubMed:17881459). May increase NKA activity by increasing the apparent affinity for Na(+) (PubMed:17881459). Involved in down-regulation of E-cadherin which results in reduced cell adhesion. Promotes metastasis (By similarity).</text>
</comment>
<comment type="subunit">
    <text evidence="4 5">Regulatory subunit of the sodium/potassium-transporting ATPase which is composed of a catalytic alpha subunit, a non-catalytic beta subunit and an additional regulatory subunit. The regulatory subunit, a member of the FXYD protein family, modulates the enzymatic activity in a tissue- and isoform-specific way by changing affinities of the Na+/K+-ATPase toward Na(+), K(+) or ATP.</text>
</comment>
<comment type="subcellular location">
    <subcellularLocation>
        <location evidence="4">Cell membrane</location>
        <topology evidence="6">Single-pass type I membrane protein</topology>
    </subcellularLocation>
    <subcellularLocation>
        <location evidence="4">Basolateral cell membrane</location>
        <topology evidence="6">Single-pass type I membrane protein</topology>
    </subcellularLocation>
    <text evidence="4">In kidneys localizes to the basolateral membrane of the connecting tubule.</text>
</comment>
<comment type="tissue specificity">
    <text evidence="4 5">Expressed mainly in epithelial tissue, such as lung, intestine and kidney. Not detected in brain, liver, muscle, and heart.</text>
</comment>
<comment type="developmental stage">
    <text>Exhibits biphasic expression during development.</text>
</comment>
<comment type="PTM">
    <text evidence="5">Glycosylated.</text>
</comment>
<comment type="similarity">
    <text evidence="6">Belongs to the FXYD family.</text>
</comment>
<gene>
    <name type="primary">Fxyd5</name>
    <name type="synonym">Oit2</name>
</gene>
<sequence>MSLSSRLCLLTIVALILPSRGQTPKKPTSIFTADQTSATTRDNVPDPDQTSPGVQTTPLIWTREEATGSQTAAQTETQQLTKMATSNPVSDPGPHTSSKKGTPAVSRIEPLSPSKNFMPPSYIEHPLDSNENNPFYYDDTTLRKRGLLVAAVLFITGIIILTSGKCRQLSQFCLNRHR</sequence>
<organism>
    <name type="scientific">Mus musculus</name>
    <name type="common">Mouse</name>
    <dbReference type="NCBI Taxonomy" id="10090"/>
    <lineage>
        <taxon>Eukaryota</taxon>
        <taxon>Metazoa</taxon>
        <taxon>Chordata</taxon>
        <taxon>Craniata</taxon>
        <taxon>Vertebrata</taxon>
        <taxon>Euteleostomi</taxon>
        <taxon>Mammalia</taxon>
        <taxon>Eutheria</taxon>
        <taxon>Euarchontoglires</taxon>
        <taxon>Glires</taxon>
        <taxon>Rodentia</taxon>
        <taxon>Myomorpha</taxon>
        <taxon>Muroidea</taxon>
        <taxon>Muridae</taxon>
        <taxon>Murinae</taxon>
        <taxon>Mus</taxon>
        <taxon>Mus</taxon>
    </lineage>
</organism>
<evidence type="ECO:0000250" key="1">
    <source>
        <dbReference type="UniProtKB" id="Q96DB9"/>
    </source>
</evidence>
<evidence type="ECO:0000255" key="2"/>
<evidence type="ECO:0000256" key="3">
    <source>
        <dbReference type="SAM" id="MobiDB-lite"/>
    </source>
</evidence>
<evidence type="ECO:0000269" key="4">
    <source>
    </source>
</evidence>
<evidence type="ECO:0000269" key="5">
    <source>
    </source>
</evidence>
<evidence type="ECO:0000305" key="6"/>
<evidence type="ECO:0000305" key="7">
    <source>
    </source>
</evidence>
<protein>
    <recommendedName>
        <fullName>FXYD domain-containing ion transport regulator 5</fullName>
    </recommendedName>
    <alternativeName>
        <fullName>EF-8</fullName>
    </alternativeName>
    <alternativeName>
        <fullName>Ion channel homolog RIC</fullName>
    </alternativeName>
    <alternativeName>
        <fullName>Oncoprotein-induced protein 2</fullName>
    </alternativeName>
</protein>
<feature type="signal peptide" evidence="7">
    <location>
        <begin position="1"/>
        <end position="21"/>
    </location>
</feature>
<feature type="chain" id="PRO_0000388996" description="FXYD domain-containing ion transport regulator 5">
    <location>
        <begin position="22"/>
        <end position="178"/>
    </location>
</feature>
<feature type="topological domain" description="Extracellular" evidence="2">
    <location>
        <begin position="22"/>
        <end position="145"/>
    </location>
</feature>
<feature type="transmembrane region" description="Helical" evidence="2">
    <location>
        <begin position="146"/>
        <end position="166"/>
    </location>
</feature>
<feature type="topological domain" description="Cytoplasmic" evidence="2">
    <location>
        <begin position="167"/>
        <end position="178"/>
    </location>
</feature>
<feature type="region of interest" description="Disordered" evidence="3">
    <location>
        <begin position="21"/>
        <end position="130"/>
    </location>
</feature>
<feature type="compositionally biased region" description="Polar residues" evidence="3">
    <location>
        <begin position="21"/>
        <end position="59"/>
    </location>
</feature>
<feature type="compositionally biased region" description="Low complexity" evidence="3">
    <location>
        <begin position="67"/>
        <end position="79"/>
    </location>
</feature>
<feature type="compositionally biased region" description="Polar residues" evidence="3">
    <location>
        <begin position="80"/>
        <end position="100"/>
    </location>
</feature>
<accession>P97808</accession>
<accession>Q3TDW1</accession>
<proteinExistence type="evidence at protein level"/>
<reference key="1">
    <citation type="journal article" date="1997" name="Mol. Cell. Biol.">
        <title>E2a-Pbx1 induces aberrant expression of tissue-specific and developmentally regulated genes when expressed in NIH 3T3 fibroblasts.</title>
        <authorList>
            <person name="Fu X."/>
            <person name="Kamps M.P."/>
        </authorList>
    </citation>
    <scope>NUCLEOTIDE SEQUENCE [MRNA]</scope>
    <source>
        <strain>BALB/cJ</strain>
    </source>
</reference>
<reference key="2">
    <citation type="journal article" date="2005" name="Science">
        <title>The transcriptional landscape of the mammalian genome.</title>
        <authorList>
            <person name="Carninci P."/>
            <person name="Kasukawa T."/>
            <person name="Katayama S."/>
            <person name="Gough J."/>
            <person name="Frith M.C."/>
            <person name="Maeda N."/>
            <person name="Oyama R."/>
            <person name="Ravasi T."/>
            <person name="Lenhard B."/>
            <person name="Wells C."/>
            <person name="Kodzius R."/>
            <person name="Shimokawa K."/>
            <person name="Bajic V.B."/>
            <person name="Brenner S.E."/>
            <person name="Batalov S."/>
            <person name="Forrest A.R."/>
            <person name="Zavolan M."/>
            <person name="Davis M.J."/>
            <person name="Wilming L.G."/>
            <person name="Aidinis V."/>
            <person name="Allen J.E."/>
            <person name="Ambesi-Impiombato A."/>
            <person name="Apweiler R."/>
            <person name="Aturaliya R.N."/>
            <person name="Bailey T.L."/>
            <person name="Bansal M."/>
            <person name="Baxter L."/>
            <person name="Beisel K.W."/>
            <person name="Bersano T."/>
            <person name="Bono H."/>
            <person name="Chalk A.M."/>
            <person name="Chiu K.P."/>
            <person name="Choudhary V."/>
            <person name="Christoffels A."/>
            <person name="Clutterbuck D.R."/>
            <person name="Crowe M.L."/>
            <person name="Dalla E."/>
            <person name="Dalrymple B.P."/>
            <person name="de Bono B."/>
            <person name="Della Gatta G."/>
            <person name="di Bernardo D."/>
            <person name="Down T."/>
            <person name="Engstrom P."/>
            <person name="Fagiolini M."/>
            <person name="Faulkner G."/>
            <person name="Fletcher C.F."/>
            <person name="Fukushima T."/>
            <person name="Furuno M."/>
            <person name="Futaki S."/>
            <person name="Gariboldi M."/>
            <person name="Georgii-Hemming P."/>
            <person name="Gingeras T.R."/>
            <person name="Gojobori T."/>
            <person name="Green R.E."/>
            <person name="Gustincich S."/>
            <person name="Harbers M."/>
            <person name="Hayashi Y."/>
            <person name="Hensch T.K."/>
            <person name="Hirokawa N."/>
            <person name="Hill D."/>
            <person name="Huminiecki L."/>
            <person name="Iacono M."/>
            <person name="Ikeo K."/>
            <person name="Iwama A."/>
            <person name="Ishikawa T."/>
            <person name="Jakt M."/>
            <person name="Kanapin A."/>
            <person name="Katoh M."/>
            <person name="Kawasawa Y."/>
            <person name="Kelso J."/>
            <person name="Kitamura H."/>
            <person name="Kitano H."/>
            <person name="Kollias G."/>
            <person name="Krishnan S.P."/>
            <person name="Kruger A."/>
            <person name="Kummerfeld S.K."/>
            <person name="Kurochkin I.V."/>
            <person name="Lareau L.F."/>
            <person name="Lazarevic D."/>
            <person name="Lipovich L."/>
            <person name="Liu J."/>
            <person name="Liuni S."/>
            <person name="McWilliam S."/>
            <person name="Madan Babu M."/>
            <person name="Madera M."/>
            <person name="Marchionni L."/>
            <person name="Matsuda H."/>
            <person name="Matsuzawa S."/>
            <person name="Miki H."/>
            <person name="Mignone F."/>
            <person name="Miyake S."/>
            <person name="Morris K."/>
            <person name="Mottagui-Tabar S."/>
            <person name="Mulder N."/>
            <person name="Nakano N."/>
            <person name="Nakauchi H."/>
            <person name="Ng P."/>
            <person name="Nilsson R."/>
            <person name="Nishiguchi S."/>
            <person name="Nishikawa S."/>
            <person name="Nori F."/>
            <person name="Ohara O."/>
            <person name="Okazaki Y."/>
            <person name="Orlando V."/>
            <person name="Pang K.C."/>
            <person name="Pavan W.J."/>
            <person name="Pavesi G."/>
            <person name="Pesole G."/>
            <person name="Petrovsky N."/>
            <person name="Piazza S."/>
            <person name="Reed J."/>
            <person name="Reid J.F."/>
            <person name="Ring B.Z."/>
            <person name="Ringwald M."/>
            <person name="Rost B."/>
            <person name="Ruan Y."/>
            <person name="Salzberg S.L."/>
            <person name="Sandelin A."/>
            <person name="Schneider C."/>
            <person name="Schoenbach C."/>
            <person name="Sekiguchi K."/>
            <person name="Semple C.A."/>
            <person name="Seno S."/>
            <person name="Sessa L."/>
            <person name="Sheng Y."/>
            <person name="Shibata Y."/>
            <person name="Shimada H."/>
            <person name="Shimada K."/>
            <person name="Silva D."/>
            <person name="Sinclair B."/>
            <person name="Sperling S."/>
            <person name="Stupka E."/>
            <person name="Sugiura K."/>
            <person name="Sultana R."/>
            <person name="Takenaka Y."/>
            <person name="Taki K."/>
            <person name="Tammoja K."/>
            <person name="Tan S.L."/>
            <person name="Tang S."/>
            <person name="Taylor M.S."/>
            <person name="Tegner J."/>
            <person name="Teichmann S.A."/>
            <person name="Ueda H.R."/>
            <person name="van Nimwegen E."/>
            <person name="Verardo R."/>
            <person name="Wei C.L."/>
            <person name="Yagi K."/>
            <person name="Yamanishi H."/>
            <person name="Zabarovsky E."/>
            <person name="Zhu S."/>
            <person name="Zimmer A."/>
            <person name="Hide W."/>
            <person name="Bult C."/>
            <person name="Grimmond S.M."/>
            <person name="Teasdale R.D."/>
            <person name="Liu E.T."/>
            <person name="Brusic V."/>
            <person name="Quackenbush J."/>
            <person name="Wahlestedt C."/>
            <person name="Mattick J.S."/>
            <person name="Hume D.A."/>
            <person name="Kai C."/>
            <person name="Sasaki D."/>
            <person name="Tomaru Y."/>
            <person name="Fukuda S."/>
            <person name="Kanamori-Katayama M."/>
            <person name="Suzuki M."/>
            <person name="Aoki J."/>
            <person name="Arakawa T."/>
            <person name="Iida J."/>
            <person name="Imamura K."/>
            <person name="Itoh M."/>
            <person name="Kato T."/>
            <person name="Kawaji H."/>
            <person name="Kawagashira N."/>
            <person name="Kawashima T."/>
            <person name="Kojima M."/>
            <person name="Kondo S."/>
            <person name="Konno H."/>
            <person name="Nakano K."/>
            <person name="Ninomiya N."/>
            <person name="Nishio T."/>
            <person name="Okada M."/>
            <person name="Plessy C."/>
            <person name="Shibata K."/>
            <person name="Shiraki T."/>
            <person name="Suzuki S."/>
            <person name="Tagami M."/>
            <person name="Waki K."/>
            <person name="Watahiki A."/>
            <person name="Okamura-Oho Y."/>
            <person name="Suzuki H."/>
            <person name="Kawai J."/>
            <person name="Hayashizaki Y."/>
        </authorList>
    </citation>
    <scope>NUCLEOTIDE SEQUENCE [LARGE SCALE MRNA]</scope>
    <source>
        <strain>C57BL/6J</strain>
        <tissue>Spleen</tissue>
    </source>
</reference>
<reference key="3">
    <citation type="journal article" date="2009" name="PLoS Biol.">
        <title>Lineage-specific biology revealed by a finished genome assembly of the mouse.</title>
        <authorList>
            <person name="Church D.M."/>
            <person name="Goodstadt L."/>
            <person name="Hillier L.W."/>
            <person name="Zody M.C."/>
            <person name="Goldstein S."/>
            <person name="She X."/>
            <person name="Bult C.J."/>
            <person name="Agarwala R."/>
            <person name="Cherry J.L."/>
            <person name="DiCuccio M."/>
            <person name="Hlavina W."/>
            <person name="Kapustin Y."/>
            <person name="Meric P."/>
            <person name="Maglott D."/>
            <person name="Birtle Z."/>
            <person name="Marques A.C."/>
            <person name="Graves T."/>
            <person name="Zhou S."/>
            <person name="Teague B."/>
            <person name="Potamousis K."/>
            <person name="Churas C."/>
            <person name="Place M."/>
            <person name="Herschleb J."/>
            <person name="Runnheim R."/>
            <person name="Forrest D."/>
            <person name="Amos-Landgraf J."/>
            <person name="Schwartz D.C."/>
            <person name="Cheng Z."/>
            <person name="Lindblad-Toh K."/>
            <person name="Eichler E.E."/>
            <person name="Ponting C.P."/>
        </authorList>
    </citation>
    <scope>NUCLEOTIDE SEQUENCE [LARGE SCALE GENOMIC DNA]</scope>
    <source>
        <strain>C57BL/6J</strain>
    </source>
</reference>
<reference key="4">
    <citation type="journal article" date="2010" name="Cell">
        <title>A tissue-specific atlas of mouse protein phosphorylation and expression.</title>
        <authorList>
            <person name="Huttlin E.L."/>
            <person name="Jedrychowski M.P."/>
            <person name="Elias J.E."/>
            <person name="Goswami T."/>
            <person name="Rad R."/>
            <person name="Beausoleil S.A."/>
            <person name="Villen J."/>
            <person name="Haas W."/>
            <person name="Sowa M.E."/>
            <person name="Gygi S.P."/>
        </authorList>
    </citation>
    <scope>IDENTIFICATION BY MASS SPECTROMETRY [LARGE SCALE ANALYSIS]</scope>
    <source>
        <tissue>Spleen</tissue>
    </source>
</reference>
<reference key="5">
    <citation type="journal article" date="2005" name="J. Biol. Chem.">
        <title>Interaction with the Na,K-ATPase and tissue distribution of FXYD5 (related to ion channel).</title>
        <authorList>
            <person name="Lubarski I."/>
            <person name="Pihakaski-Maunsbach K."/>
            <person name="Karlish S.J."/>
            <person name="Maunsbach A.B."/>
            <person name="Garty H."/>
        </authorList>
    </citation>
    <scope>FUNCTION</scope>
    <scope>SUBUNIT</scope>
    <scope>SUBCELLULAR LOCATION</scope>
    <scope>TISSUE SPECIFICITY</scope>
</reference>
<reference key="6">
    <citation type="journal article" date="2007" name="Am. J. Physiol.">
        <title>Structural and functional interactions between FXYD5 and the Na+-K+-ATPase.</title>
        <authorList>
            <person name="Lubarski I."/>
            <person name="Karlish S.J."/>
            <person name="Garty H."/>
        </authorList>
    </citation>
    <scope>FUNCTION</scope>
    <scope>SUBUNIT</scope>
    <scope>GLYCOSYLATION</scope>
    <scope>TISSUE SPECIFICITY</scope>
</reference>
<name>FXYD5_MOUSE</name>